<name>GR09A_DROME</name>
<sequence>MSLWLEHFLTGYFQLCGLVCGWSGSRLGRLLSSTFLVLILIELVGEIETYFTEENPDNESVPAYFAKVIMGVNMAYKMIHAWIALSALFECRRFRYLLEELPPVKATSFIYRHLILEIILFACNAFLVLSEYTIRGIYLENLRYAYSLQAVRARYLQMMVLVDRLDGKLEQLHHRVISGSSDYKTLRLDYAHLAKVTRSLSHLFGLSLLLLNVLCLGDWIIVCNVYFMVAYLQVLPATLFLFGQVMFVVCPTLIKIWSICAASHRCVSKSKHLQQQLKDLPGQTPVERSQIEGFALQIMQDPIQIDVCGIYHLNLQTLAGMFFFILEALVIFLQFVSLVRT</sequence>
<organism evidence="6">
    <name type="scientific">Drosophila melanogaster</name>
    <name type="common">Fruit fly</name>
    <dbReference type="NCBI Taxonomy" id="7227"/>
    <lineage>
        <taxon>Eukaryota</taxon>
        <taxon>Metazoa</taxon>
        <taxon>Ecdysozoa</taxon>
        <taxon>Arthropoda</taxon>
        <taxon>Hexapoda</taxon>
        <taxon>Insecta</taxon>
        <taxon>Pterygota</taxon>
        <taxon>Neoptera</taxon>
        <taxon>Endopterygota</taxon>
        <taxon>Diptera</taxon>
        <taxon>Brachycera</taxon>
        <taxon>Muscomorpha</taxon>
        <taxon>Ephydroidea</taxon>
        <taxon>Drosophilidae</taxon>
        <taxon>Drosophila</taxon>
        <taxon>Sophophora</taxon>
    </lineage>
</organism>
<feature type="chain" id="PRO_0000216489" description="Putative gustatory receptor 9a">
    <location>
        <begin position="1"/>
        <end position="341"/>
    </location>
</feature>
<feature type="topological domain" description="Cytoplasmic" evidence="1">
    <location>
        <position position="1"/>
    </location>
</feature>
<feature type="transmembrane region" description="Helical; Name=1" evidence="2">
    <location>
        <begin position="2"/>
        <end position="22"/>
    </location>
</feature>
<feature type="topological domain" description="Extracellular" evidence="1">
    <location>
        <begin position="23"/>
        <end position="30"/>
    </location>
</feature>
<feature type="transmembrane region" description="Helical; Name=2" evidence="2">
    <location>
        <begin position="31"/>
        <end position="51"/>
    </location>
</feature>
<feature type="topological domain" description="Cytoplasmic" evidence="1">
    <location>
        <begin position="52"/>
        <end position="68"/>
    </location>
</feature>
<feature type="transmembrane region" description="Helical; Name=3" evidence="2">
    <location>
        <begin position="69"/>
        <end position="89"/>
    </location>
</feature>
<feature type="topological domain" description="Extracellular" evidence="1">
    <location>
        <begin position="90"/>
        <end position="113"/>
    </location>
</feature>
<feature type="transmembrane region" description="Helical; Name=4" evidence="2">
    <location>
        <begin position="114"/>
        <end position="134"/>
    </location>
</feature>
<feature type="topological domain" description="Cytoplasmic" evidence="1">
    <location>
        <begin position="135"/>
        <end position="202"/>
    </location>
</feature>
<feature type="transmembrane region" description="Helical; Name=5" evidence="2">
    <location>
        <begin position="203"/>
        <end position="223"/>
    </location>
</feature>
<feature type="topological domain" description="Extracellular" evidence="1">
    <location>
        <begin position="224"/>
        <end position="233"/>
    </location>
</feature>
<feature type="transmembrane region" description="Helical; Name=6" evidence="2">
    <location>
        <begin position="234"/>
        <end position="254"/>
    </location>
</feature>
<feature type="topological domain" description="Cytoplasmic" evidence="1">
    <location>
        <begin position="255"/>
        <end position="318"/>
    </location>
</feature>
<feature type="transmembrane region" description="Helical; Name=7" evidence="2">
    <location>
        <begin position="319"/>
        <end position="339"/>
    </location>
</feature>
<feature type="topological domain" description="Extracellular" evidence="1">
    <location>
        <begin position="340"/>
        <end position="341"/>
    </location>
</feature>
<dbReference type="EMBL" id="AE014298">
    <property type="protein sequence ID" value="AAN09626.1"/>
    <property type="molecule type" value="Genomic_DNA"/>
</dbReference>
<dbReference type="RefSeq" id="NP_727392.1">
    <property type="nucleotide sequence ID" value="NM_167217.1"/>
</dbReference>
<dbReference type="SMR" id="Q8IRL8"/>
<dbReference type="FunCoup" id="Q8IRL8">
    <property type="interactions" value="13"/>
</dbReference>
<dbReference type="STRING" id="7227.FBpp0071355"/>
<dbReference type="PaxDb" id="7227-FBpp0071355"/>
<dbReference type="EnsemblMetazoa" id="FBtr0071420">
    <property type="protein sequence ID" value="FBpp0071355"/>
    <property type="gene ID" value="FBgn0052693"/>
</dbReference>
<dbReference type="GeneID" id="318158"/>
<dbReference type="KEGG" id="dme:Dmel_CG32693"/>
<dbReference type="UCSC" id="CG32693-RA">
    <property type="organism name" value="d. melanogaster"/>
</dbReference>
<dbReference type="AGR" id="FB:FBgn0052693"/>
<dbReference type="CTD" id="318158"/>
<dbReference type="FlyBase" id="FBgn0052693">
    <property type="gene designation" value="Gr9a"/>
</dbReference>
<dbReference type="VEuPathDB" id="VectorBase:FBgn0052693"/>
<dbReference type="eggNOG" id="ENOG502TBA1">
    <property type="taxonomic scope" value="Eukaryota"/>
</dbReference>
<dbReference type="HOGENOM" id="CLU_814509_0_0_1"/>
<dbReference type="InParanoid" id="Q8IRL8"/>
<dbReference type="OMA" id="IVCNVYF"/>
<dbReference type="OrthoDB" id="6366728at2759"/>
<dbReference type="PhylomeDB" id="Q8IRL8"/>
<dbReference type="BioGRID-ORCS" id="318158">
    <property type="hits" value="0 hits in 1 CRISPR screen"/>
</dbReference>
<dbReference type="GenomeRNAi" id="318158"/>
<dbReference type="PRO" id="PR:Q8IRL8"/>
<dbReference type="Proteomes" id="UP000000803">
    <property type="component" value="Chromosome X"/>
</dbReference>
<dbReference type="GO" id="GO:0030424">
    <property type="term" value="C:axon"/>
    <property type="evidence" value="ECO:0000318"/>
    <property type="project" value="GO_Central"/>
</dbReference>
<dbReference type="GO" id="GO:0030425">
    <property type="term" value="C:dendrite"/>
    <property type="evidence" value="ECO:0000318"/>
    <property type="project" value="GO_Central"/>
</dbReference>
<dbReference type="GO" id="GO:0016020">
    <property type="term" value="C:membrane"/>
    <property type="evidence" value="ECO:0000255"/>
    <property type="project" value="FlyBase"/>
</dbReference>
<dbReference type="GO" id="GO:0043025">
    <property type="term" value="C:neuronal cell body"/>
    <property type="evidence" value="ECO:0000318"/>
    <property type="project" value="GO_Central"/>
</dbReference>
<dbReference type="GO" id="GO:0005886">
    <property type="term" value="C:plasma membrane"/>
    <property type="evidence" value="ECO:0000250"/>
    <property type="project" value="FlyBase"/>
</dbReference>
<dbReference type="GO" id="GO:0015276">
    <property type="term" value="F:ligand-gated monoatomic ion channel activity"/>
    <property type="evidence" value="ECO:0000250"/>
    <property type="project" value="FlyBase"/>
</dbReference>
<dbReference type="GO" id="GO:0008527">
    <property type="term" value="F:taste receptor activity"/>
    <property type="evidence" value="ECO:0000250"/>
    <property type="project" value="FlyBase"/>
</dbReference>
<dbReference type="GO" id="GO:0007635">
    <property type="term" value="P:chemosensory behavior"/>
    <property type="evidence" value="ECO:0000318"/>
    <property type="project" value="GO_Central"/>
</dbReference>
<dbReference type="GO" id="GO:0050912">
    <property type="term" value="P:detection of chemical stimulus involved in sensory perception of taste"/>
    <property type="evidence" value="ECO:0000250"/>
    <property type="project" value="FlyBase"/>
</dbReference>
<dbReference type="GO" id="GO:0008049">
    <property type="term" value="P:male courtship behavior"/>
    <property type="evidence" value="ECO:0000318"/>
    <property type="project" value="GO_Central"/>
</dbReference>
<dbReference type="GO" id="GO:0034220">
    <property type="term" value="P:monoatomic ion transmembrane transport"/>
    <property type="evidence" value="ECO:0000250"/>
    <property type="project" value="FlyBase"/>
</dbReference>
<dbReference type="GO" id="GO:0007165">
    <property type="term" value="P:signal transduction"/>
    <property type="evidence" value="ECO:0007669"/>
    <property type="project" value="UniProtKB-KW"/>
</dbReference>
<dbReference type="InterPro" id="IPR013604">
    <property type="entry name" value="7TM_chemorcpt"/>
</dbReference>
<dbReference type="Pfam" id="PF08395">
    <property type="entry name" value="7tm_7"/>
    <property type="match status" value="1"/>
</dbReference>
<comment type="function">
    <text evidence="1">Probable gustatory receptor which mediates acceptance or avoidance behavior, depending on its substrates.</text>
</comment>
<comment type="subcellular location">
    <subcellularLocation>
        <location evidence="1">Cell membrane</location>
        <topology evidence="1">Multi-pass membrane protein</topology>
    </subcellularLocation>
</comment>
<comment type="tissue specificity">
    <text evidence="4">Expressed in neurons of the terminal external chemosensory organ of larvae.</text>
</comment>
<comment type="similarity">
    <text evidence="5">Belongs to the insect chemoreceptor superfamily. Gustatory receptor (GR) family. Gr2a subfamily.</text>
</comment>
<keyword id="KW-1003">Cell membrane</keyword>
<keyword id="KW-0472">Membrane</keyword>
<keyword id="KW-0675">Receptor</keyword>
<keyword id="KW-1185">Reference proteome</keyword>
<keyword id="KW-0807">Transducer</keyword>
<keyword id="KW-0812">Transmembrane</keyword>
<keyword id="KW-1133">Transmembrane helix</keyword>
<evidence type="ECO:0000250" key="1"/>
<evidence type="ECO:0000255" key="2"/>
<evidence type="ECO:0000269" key="3">
    <source>
    </source>
</evidence>
<evidence type="ECO:0000269" key="4">
    <source>
    </source>
</evidence>
<evidence type="ECO:0000305" key="5"/>
<evidence type="ECO:0000312" key="6">
    <source>
        <dbReference type="EMBL" id="AAN09626.1"/>
    </source>
</evidence>
<proteinExistence type="evidence at transcript level"/>
<protein>
    <recommendedName>
        <fullName>Putative gustatory receptor 9a</fullName>
    </recommendedName>
</protein>
<reference evidence="5" key="1">
    <citation type="journal article" date="2000" name="Science">
        <title>The genome sequence of Drosophila melanogaster.</title>
        <authorList>
            <person name="Adams M.D."/>
            <person name="Celniker S.E."/>
            <person name="Holt R.A."/>
            <person name="Evans C.A."/>
            <person name="Gocayne J.D."/>
            <person name="Amanatides P.G."/>
            <person name="Scherer S.E."/>
            <person name="Li P.W."/>
            <person name="Hoskins R.A."/>
            <person name="Galle R.F."/>
            <person name="George R.A."/>
            <person name="Lewis S.E."/>
            <person name="Richards S."/>
            <person name="Ashburner M."/>
            <person name="Henderson S.N."/>
            <person name="Sutton G.G."/>
            <person name="Wortman J.R."/>
            <person name="Yandell M.D."/>
            <person name="Zhang Q."/>
            <person name="Chen L.X."/>
            <person name="Brandon R.C."/>
            <person name="Rogers Y.-H.C."/>
            <person name="Blazej R.G."/>
            <person name="Champe M."/>
            <person name="Pfeiffer B.D."/>
            <person name="Wan K.H."/>
            <person name="Doyle C."/>
            <person name="Baxter E.G."/>
            <person name="Helt G."/>
            <person name="Nelson C.R."/>
            <person name="Miklos G.L.G."/>
            <person name="Abril J.F."/>
            <person name="Agbayani A."/>
            <person name="An H.-J."/>
            <person name="Andrews-Pfannkoch C."/>
            <person name="Baldwin D."/>
            <person name="Ballew R.M."/>
            <person name="Basu A."/>
            <person name="Baxendale J."/>
            <person name="Bayraktaroglu L."/>
            <person name="Beasley E.M."/>
            <person name="Beeson K.Y."/>
            <person name="Benos P.V."/>
            <person name="Berman B.P."/>
            <person name="Bhandari D."/>
            <person name="Bolshakov S."/>
            <person name="Borkova D."/>
            <person name="Botchan M.R."/>
            <person name="Bouck J."/>
            <person name="Brokstein P."/>
            <person name="Brottier P."/>
            <person name="Burtis K.C."/>
            <person name="Busam D.A."/>
            <person name="Butler H."/>
            <person name="Cadieu E."/>
            <person name="Center A."/>
            <person name="Chandra I."/>
            <person name="Cherry J.M."/>
            <person name="Cawley S."/>
            <person name="Dahlke C."/>
            <person name="Davenport L.B."/>
            <person name="Davies P."/>
            <person name="de Pablos B."/>
            <person name="Delcher A."/>
            <person name="Deng Z."/>
            <person name="Mays A.D."/>
            <person name="Dew I."/>
            <person name="Dietz S.M."/>
            <person name="Dodson K."/>
            <person name="Doup L.E."/>
            <person name="Downes M."/>
            <person name="Dugan-Rocha S."/>
            <person name="Dunkov B.C."/>
            <person name="Dunn P."/>
            <person name="Durbin K.J."/>
            <person name="Evangelista C.C."/>
            <person name="Ferraz C."/>
            <person name="Ferriera S."/>
            <person name="Fleischmann W."/>
            <person name="Fosler C."/>
            <person name="Gabrielian A.E."/>
            <person name="Garg N.S."/>
            <person name="Gelbart W.M."/>
            <person name="Glasser K."/>
            <person name="Glodek A."/>
            <person name="Gong F."/>
            <person name="Gorrell J.H."/>
            <person name="Gu Z."/>
            <person name="Guan P."/>
            <person name="Harris M."/>
            <person name="Harris N.L."/>
            <person name="Harvey D.A."/>
            <person name="Heiman T.J."/>
            <person name="Hernandez J.R."/>
            <person name="Houck J."/>
            <person name="Hostin D."/>
            <person name="Houston K.A."/>
            <person name="Howland T.J."/>
            <person name="Wei M.-H."/>
            <person name="Ibegwam C."/>
            <person name="Jalali M."/>
            <person name="Kalush F."/>
            <person name="Karpen G.H."/>
            <person name="Ke Z."/>
            <person name="Kennison J.A."/>
            <person name="Ketchum K.A."/>
            <person name="Kimmel B.E."/>
            <person name="Kodira C.D."/>
            <person name="Kraft C.L."/>
            <person name="Kravitz S."/>
            <person name="Kulp D."/>
            <person name="Lai Z."/>
            <person name="Lasko P."/>
            <person name="Lei Y."/>
            <person name="Levitsky A.A."/>
            <person name="Li J.H."/>
            <person name="Li Z."/>
            <person name="Liang Y."/>
            <person name="Lin X."/>
            <person name="Liu X."/>
            <person name="Mattei B."/>
            <person name="McIntosh T.C."/>
            <person name="McLeod M.P."/>
            <person name="McPherson D."/>
            <person name="Merkulov G."/>
            <person name="Milshina N.V."/>
            <person name="Mobarry C."/>
            <person name="Morris J."/>
            <person name="Moshrefi A."/>
            <person name="Mount S.M."/>
            <person name="Moy M."/>
            <person name="Murphy B."/>
            <person name="Murphy L."/>
            <person name="Muzny D.M."/>
            <person name="Nelson D.L."/>
            <person name="Nelson D.R."/>
            <person name="Nelson K.A."/>
            <person name="Nixon K."/>
            <person name="Nusskern D.R."/>
            <person name="Pacleb J.M."/>
            <person name="Palazzolo M."/>
            <person name="Pittman G.S."/>
            <person name="Pan S."/>
            <person name="Pollard J."/>
            <person name="Puri V."/>
            <person name="Reese M.G."/>
            <person name="Reinert K."/>
            <person name="Remington K."/>
            <person name="Saunders R.D.C."/>
            <person name="Scheeler F."/>
            <person name="Shen H."/>
            <person name="Shue B.C."/>
            <person name="Siden-Kiamos I."/>
            <person name="Simpson M."/>
            <person name="Skupski M.P."/>
            <person name="Smith T.J."/>
            <person name="Spier E."/>
            <person name="Spradling A.C."/>
            <person name="Stapleton M."/>
            <person name="Strong R."/>
            <person name="Sun E."/>
            <person name="Svirskas R."/>
            <person name="Tector C."/>
            <person name="Turner R."/>
            <person name="Venter E."/>
            <person name="Wang A.H."/>
            <person name="Wang X."/>
            <person name="Wang Z.-Y."/>
            <person name="Wassarman D.A."/>
            <person name="Weinstock G.M."/>
            <person name="Weissenbach J."/>
            <person name="Williams S.M."/>
            <person name="Woodage T."/>
            <person name="Worley K.C."/>
            <person name="Wu D."/>
            <person name="Yang S."/>
            <person name="Yao Q.A."/>
            <person name="Ye J."/>
            <person name="Yeh R.-F."/>
            <person name="Zaveri J.S."/>
            <person name="Zhan M."/>
            <person name="Zhang G."/>
            <person name="Zhao Q."/>
            <person name="Zheng L."/>
            <person name="Zheng X.H."/>
            <person name="Zhong F.N."/>
            <person name="Zhong W."/>
            <person name="Zhou X."/>
            <person name="Zhu S.C."/>
            <person name="Zhu X."/>
            <person name="Smith H.O."/>
            <person name="Gibbs R.A."/>
            <person name="Myers E.W."/>
            <person name="Rubin G.M."/>
            <person name="Venter J.C."/>
        </authorList>
    </citation>
    <scope>NUCLEOTIDE SEQUENCE [LARGE SCALE GENOMIC DNA]</scope>
    <source>
        <strain evidence="3">Berkeley</strain>
    </source>
</reference>
<reference evidence="5" key="2">
    <citation type="journal article" date="2002" name="Genome Biol.">
        <title>Annotation of the Drosophila melanogaster euchromatic genome: a systematic review.</title>
        <authorList>
            <person name="Misra S."/>
            <person name="Crosby M.A."/>
            <person name="Mungall C.J."/>
            <person name="Matthews B.B."/>
            <person name="Campbell K.S."/>
            <person name="Hradecky P."/>
            <person name="Huang Y."/>
            <person name="Kaminker J.S."/>
            <person name="Millburn G.H."/>
            <person name="Prochnik S.E."/>
            <person name="Smith C.D."/>
            <person name="Tupy J.L."/>
            <person name="Whitfield E.J."/>
            <person name="Bayraktaroglu L."/>
            <person name="Berman B.P."/>
            <person name="Bettencourt B.R."/>
            <person name="Celniker S.E."/>
            <person name="de Grey A.D.N.J."/>
            <person name="Drysdale R.A."/>
            <person name="Harris N.L."/>
            <person name="Richter J."/>
            <person name="Russo S."/>
            <person name="Schroeder A.J."/>
            <person name="Shu S.Q."/>
            <person name="Stapleton M."/>
            <person name="Yamada C."/>
            <person name="Ashburner M."/>
            <person name="Gelbart W.M."/>
            <person name="Rubin G.M."/>
            <person name="Lewis S.E."/>
        </authorList>
    </citation>
    <scope>GENOME REANNOTATION</scope>
    <source>
        <strain>Berkeley</strain>
    </source>
</reference>
<reference key="3">
    <citation type="journal article" date="2011" name="J. Neurosci.">
        <title>Molecular and cellular organization of the taste system in the Drosophila larva.</title>
        <authorList>
            <person name="Kwon J.Y."/>
            <person name="Dahanukar A."/>
            <person name="Weiss L.A."/>
            <person name="Carlson J.R."/>
        </authorList>
    </citation>
    <scope>TISSUE SPECIFICITY</scope>
</reference>
<gene>
    <name type="primary">Gr9a</name>
    <name type="ORF">CG32693</name>
</gene>
<accession>Q8IRL8</accession>